<reference key="1">
    <citation type="journal article" date="2007" name="PLoS Biol.">
        <title>Evolution of symbiotic bacteria in the distal human intestine.</title>
        <authorList>
            <person name="Xu J."/>
            <person name="Mahowald M.A."/>
            <person name="Ley R.E."/>
            <person name="Lozupone C.A."/>
            <person name="Hamady M."/>
            <person name="Martens E.C."/>
            <person name="Henrissat B."/>
            <person name="Coutinho P.M."/>
            <person name="Minx P."/>
            <person name="Latreille P."/>
            <person name="Cordum H."/>
            <person name="Van Brunt A."/>
            <person name="Kim K."/>
            <person name="Fulton R.S."/>
            <person name="Fulton L.A."/>
            <person name="Clifton S.W."/>
            <person name="Wilson R.K."/>
            <person name="Knight R.D."/>
            <person name="Gordon J.I."/>
        </authorList>
    </citation>
    <scope>NUCLEOTIDE SEQUENCE [LARGE SCALE GENOMIC DNA]</scope>
    <source>
        <strain>ATCC 8503 / DSM 20701 / CIP 104284 / JCM 5825 / NCTC 11152</strain>
    </source>
</reference>
<keyword id="KW-0963">Cytoplasm</keyword>
<keyword id="KW-0570">Pentose shunt</keyword>
<keyword id="KW-1185">Reference proteome</keyword>
<keyword id="KW-0704">Schiff base</keyword>
<keyword id="KW-0808">Transferase</keyword>
<gene>
    <name evidence="1" type="primary">tal</name>
    <name type="ordered locus">BDI_2999</name>
</gene>
<dbReference type="EC" id="2.2.1.2" evidence="1"/>
<dbReference type="EMBL" id="CP000140">
    <property type="protein sequence ID" value="ABR44707.1"/>
    <property type="molecule type" value="Genomic_DNA"/>
</dbReference>
<dbReference type="SMR" id="A6LG93"/>
<dbReference type="STRING" id="435591.BDI_2999"/>
<dbReference type="PaxDb" id="435591-BDI_2999"/>
<dbReference type="KEGG" id="pdi:BDI_2999"/>
<dbReference type="eggNOG" id="COG0176">
    <property type="taxonomic scope" value="Bacteria"/>
</dbReference>
<dbReference type="HOGENOM" id="CLU_079764_0_0_10"/>
<dbReference type="BioCyc" id="PDIS435591:G1G5A-3076-MONOMER"/>
<dbReference type="UniPathway" id="UPA00115">
    <property type="reaction ID" value="UER00414"/>
</dbReference>
<dbReference type="Proteomes" id="UP000000566">
    <property type="component" value="Chromosome"/>
</dbReference>
<dbReference type="GO" id="GO:0005737">
    <property type="term" value="C:cytoplasm"/>
    <property type="evidence" value="ECO:0007669"/>
    <property type="project" value="UniProtKB-SubCell"/>
</dbReference>
<dbReference type="GO" id="GO:0016832">
    <property type="term" value="F:aldehyde-lyase activity"/>
    <property type="evidence" value="ECO:0007669"/>
    <property type="project" value="InterPro"/>
</dbReference>
<dbReference type="GO" id="GO:0004801">
    <property type="term" value="F:transaldolase activity"/>
    <property type="evidence" value="ECO:0007669"/>
    <property type="project" value="UniProtKB-UniRule"/>
</dbReference>
<dbReference type="GO" id="GO:0005975">
    <property type="term" value="P:carbohydrate metabolic process"/>
    <property type="evidence" value="ECO:0007669"/>
    <property type="project" value="InterPro"/>
</dbReference>
<dbReference type="GO" id="GO:0006098">
    <property type="term" value="P:pentose-phosphate shunt"/>
    <property type="evidence" value="ECO:0007669"/>
    <property type="project" value="UniProtKB-UniRule"/>
</dbReference>
<dbReference type="CDD" id="cd00956">
    <property type="entry name" value="Transaldolase_FSA"/>
    <property type="match status" value="1"/>
</dbReference>
<dbReference type="FunFam" id="3.20.20.70:FF:000018">
    <property type="entry name" value="Probable transaldolase"/>
    <property type="match status" value="1"/>
</dbReference>
<dbReference type="Gene3D" id="3.20.20.70">
    <property type="entry name" value="Aldolase class I"/>
    <property type="match status" value="1"/>
</dbReference>
<dbReference type="HAMAP" id="MF_00494">
    <property type="entry name" value="Transaldolase_3b"/>
    <property type="match status" value="1"/>
</dbReference>
<dbReference type="InterPro" id="IPR013785">
    <property type="entry name" value="Aldolase_TIM"/>
</dbReference>
<dbReference type="InterPro" id="IPR001585">
    <property type="entry name" value="TAL/FSA"/>
</dbReference>
<dbReference type="InterPro" id="IPR022999">
    <property type="entry name" value="Transaldolase_3B"/>
</dbReference>
<dbReference type="InterPro" id="IPR004731">
    <property type="entry name" value="Transaldolase_3B/F6P_aldolase"/>
</dbReference>
<dbReference type="InterPro" id="IPR018225">
    <property type="entry name" value="Transaldolase_AS"/>
</dbReference>
<dbReference type="InterPro" id="IPR033919">
    <property type="entry name" value="TSA/FSA_arc/bac"/>
</dbReference>
<dbReference type="NCBIfam" id="TIGR00875">
    <property type="entry name" value="fsa_talC_mipB"/>
    <property type="match status" value="1"/>
</dbReference>
<dbReference type="PANTHER" id="PTHR10683:SF40">
    <property type="entry name" value="FRUCTOSE-6-PHOSPHATE ALDOLASE 1-RELATED"/>
    <property type="match status" value="1"/>
</dbReference>
<dbReference type="PANTHER" id="PTHR10683">
    <property type="entry name" value="TRANSALDOLASE"/>
    <property type="match status" value="1"/>
</dbReference>
<dbReference type="Pfam" id="PF00923">
    <property type="entry name" value="TAL_FSA"/>
    <property type="match status" value="1"/>
</dbReference>
<dbReference type="SUPFAM" id="SSF51569">
    <property type="entry name" value="Aldolase"/>
    <property type="match status" value="1"/>
</dbReference>
<dbReference type="PROSITE" id="PS01054">
    <property type="entry name" value="TRANSALDOLASE_1"/>
    <property type="match status" value="1"/>
</dbReference>
<organism>
    <name type="scientific">Parabacteroides distasonis (strain ATCC 8503 / DSM 20701 / CIP 104284 / JCM 5825 / NCTC 11152)</name>
    <dbReference type="NCBI Taxonomy" id="435591"/>
    <lineage>
        <taxon>Bacteria</taxon>
        <taxon>Pseudomonadati</taxon>
        <taxon>Bacteroidota</taxon>
        <taxon>Bacteroidia</taxon>
        <taxon>Bacteroidales</taxon>
        <taxon>Tannerellaceae</taxon>
        <taxon>Parabacteroides</taxon>
    </lineage>
</organism>
<proteinExistence type="inferred from homology"/>
<evidence type="ECO:0000255" key="1">
    <source>
        <dbReference type="HAMAP-Rule" id="MF_00494"/>
    </source>
</evidence>
<sequence length="218" mass="23594">MKFFIDTANLDQIREANELGVLDGVTTNPSLMAKEGIRGVENQRKHYLEICEIVGGDVSAEVIATDLEGMIKEGEELAALHPNIVVKVPCIEAGIKAIKYFTRKGIRTNCTLVFSVGQALLAAKAGATYVSPFVGRLDDIASDGIELVRKIVEMYDYYDYDTQVLAASIRSTQHIIQCVEAGADVATCPLSAIKGLLKHPLTDSGLATFLADYKKVNG</sequence>
<feature type="chain" id="PRO_1000126335" description="Probable transaldolase">
    <location>
        <begin position="1"/>
        <end position="218"/>
    </location>
</feature>
<feature type="active site" description="Schiff-base intermediate with substrate" evidence="1">
    <location>
        <position position="87"/>
    </location>
</feature>
<accession>A6LG93</accession>
<name>TAL_PARD8</name>
<comment type="function">
    <text evidence="1">Transaldolase is important for the balance of metabolites in the pentose-phosphate pathway.</text>
</comment>
<comment type="catalytic activity">
    <reaction evidence="1">
        <text>D-sedoheptulose 7-phosphate + D-glyceraldehyde 3-phosphate = D-erythrose 4-phosphate + beta-D-fructose 6-phosphate</text>
        <dbReference type="Rhea" id="RHEA:17053"/>
        <dbReference type="ChEBI" id="CHEBI:16897"/>
        <dbReference type="ChEBI" id="CHEBI:57483"/>
        <dbReference type="ChEBI" id="CHEBI:57634"/>
        <dbReference type="ChEBI" id="CHEBI:59776"/>
        <dbReference type="EC" id="2.2.1.2"/>
    </reaction>
</comment>
<comment type="pathway">
    <text evidence="1">Carbohydrate degradation; pentose phosphate pathway; D-glyceraldehyde 3-phosphate and beta-D-fructose 6-phosphate from D-ribose 5-phosphate and D-xylulose 5-phosphate (non-oxidative stage): step 2/3.</text>
</comment>
<comment type="subcellular location">
    <subcellularLocation>
        <location evidence="1">Cytoplasm</location>
    </subcellularLocation>
</comment>
<comment type="similarity">
    <text evidence="1">Belongs to the transaldolase family. Type 3B subfamily.</text>
</comment>
<protein>
    <recommendedName>
        <fullName evidence="1">Probable transaldolase</fullName>
        <ecNumber evidence="1">2.2.1.2</ecNumber>
    </recommendedName>
</protein>